<gene>
    <name evidence="1" type="primary">gatC</name>
    <name type="ordered locus">Mchl_3646</name>
</gene>
<proteinExistence type="inferred from homology"/>
<comment type="function">
    <text evidence="1">Allows the formation of correctly charged Asn-tRNA(Asn) or Gln-tRNA(Gln) through the transamidation of misacylated Asp-tRNA(Asn) or Glu-tRNA(Gln) in organisms which lack either or both of asparaginyl-tRNA or glutaminyl-tRNA synthetases. The reaction takes place in the presence of glutamine and ATP through an activated phospho-Asp-tRNA(Asn) or phospho-Glu-tRNA(Gln).</text>
</comment>
<comment type="catalytic activity">
    <reaction evidence="1">
        <text>L-glutamyl-tRNA(Gln) + L-glutamine + ATP + H2O = L-glutaminyl-tRNA(Gln) + L-glutamate + ADP + phosphate + H(+)</text>
        <dbReference type="Rhea" id="RHEA:17521"/>
        <dbReference type="Rhea" id="RHEA-COMP:9681"/>
        <dbReference type="Rhea" id="RHEA-COMP:9684"/>
        <dbReference type="ChEBI" id="CHEBI:15377"/>
        <dbReference type="ChEBI" id="CHEBI:15378"/>
        <dbReference type="ChEBI" id="CHEBI:29985"/>
        <dbReference type="ChEBI" id="CHEBI:30616"/>
        <dbReference type="ChEBI" id="CHEBI:43474"/>
        <dbReference type="ChEBI" id="CHEBI:58359"/>
        <dbReference type="ChEBI" id="CHEBI:78520"/>
        <dbReference type="ChEBI" id="CHEBI:78521"/>
        <dbReference type="ChEBI" id="CHEBI:456216"/>
    </reaction>
</comment>
<comment type="catalytic activity">
    <reaction evidence="1">
        <text>L-aspartyl-tRNA(Asn) + L-glutamine + ATP + H2O = L-asparaginyl-tRNA(Asn) + L-glutamate + ADP + phosphate + 2 H(+)</text>
        <dbReference type="Rhea" id="RHEA:14513"/>
        <dbReference type="Rhea" id="RHEA-COMP:9674"/>
        <dbReference type="Rhea" id="RHEA-COMP:9677"/>
        <dbReference type="ChEBI" id="CHEBI:15377"/>
        <dbReference type="ChEBI" id="CHEBI:15378"/>
        <dbReference type="ChEBI" id="CHEBI:29985"/>
        <dbReference type="ChEBI" id="CHEBI:30616"/>
        <dbReference type="ChEBI" id="CHEBI:43474"/>
        <dbReference type="ChEBI" id="CHEBI:58359"/>
        <dbReference type="ChEBI" id="CHEBI:78515"/>
        <dbReference type="ChEBI" id="CHEBI:78516"/>
        <dbReference type="ChEBI" id="CHEBI:456216"/>
    </reaction>
</comment>
<comment type="subunit">
    <text evidence="1">Heterotrimer of A, B and C subunits.</text>
</comment>
<comment type="similarity">
    <text evidence="1">Belongs to the GatC family.</text>
</comment>
<reference key="1">
    <citation type="submission" date="2008-12" db="EMBL/GenBank/DDBJ databases">
        <title>Complete sequence of chromosome of Methylobacterium chloromethanicum CM4.</title>
        <authorList>
            <consortium name="US DOE Joint Genome Institute"/>
            <person name="Lucas S."/>
            <person name="Copeland A."/>
            <person name="Lapidus A."/>
            <person name="Glavina del Rio T."/>
            <person name="Dalin E."/>
            <person name="Tice H."/>
            <person name="Bruce D."/>
            <person name="Goodwin L."/>
            <person name="Pitluck S."/>
            <person name="Chertkov O."/>
            <person name="Brettin T."/>
            <person name="Detter J.C."/>
            <person name="Han C."/>
            <person name="Larimer F."/>
            <person name="Land M."/>
            <person name="Hauser L."/>
            <person name="Kyrpides N."/>
            <person name="Mikhailova N."/>
            <person name="Marx C."/>
            <person name="Richardson P."/>
        </authorList>
    </citation>
    <scope>NUCLEOTIDE SEQUENCE [LARGE SCALE GENOMIC DNA]</scope>
    <source>
        <strain>CM4 / NCIMB 13688</strain>
    </source>
</reference>
<feature type="chain" id="PRO_1000122572" description="Aspartyl/glutamyl-tRNA(Asn/Gln) amidotransferase subunit C">
    <location>
        <begin position="1"/>
        <end position="95"/>
    </location>
</feature>
<sequence length="95" mass="10294">MSVDETTVRRIAHLARIAVTDEEVGPLKGELNAILAFVEQLGAVDVEGVEPMTSVTPMRMKKRADVVNDGGRASDIVANAPETEDNYFLVPKVVE</sequence>
<organism>
    <name type="scientific">Methylorubrum extorquens (strain CM4 / NCIMB 13688)</name>
    <name type="common">Methylobacterium extorquens</name>
    <dbReference type="NCBI Taxonomy" id="440085"/>
    <lineage>
        <taxon>Bacteria</taxon>
        <taxon>Pseudomonadati</taxon>
        <taxon>Pseudomonadota</taxon>
        <taxon>Alphaproteobacteria</taxon>
        <taxon>Hyphomicrobiales</taxon>
        <taxon>Methylobacteriaceae</taxon>
        <taxon>Methylorubrum</taxon>
    </lineage>
</organism>
<name>GATC_METC4</name>
<accession>B7KWA9</accession>
<keyword id="KW-0067">ATP-binding</keyword>
<keyword id="KW-0436">Ligase</keyword>
<keyword id="KW-0547">Nucleotide-binding</keyword>
<keyword id="KW-0648">Protein biosynthesis</keyword>
<protein>
    <recommendedName>
        <fullName evidence="1">Aspartyl/glutamyl-tRNA(Asn/Gln) amidotransferase subunit C</fullName>
        <shortName evidence="1">Asp/Glu-ADT subunit C</shortName>
        <ecNumber evidence="1">6.3.5.-</ecNumber>
    </recommendedName>
</protein>
<dbReference type="EC" id="6.3.5.-" evidence="1"/>
<dbReference type="EMBL" id="CP001298">
    <property type="protein sequence ID" value="ACK84466.1"/>
    <property type="molecule type" value="Genomic_DNA"/>
</dbReference>
<dbReference type="RefSeq" id="WP_003599355.1">
    <property type="nucleotide sequence ID" value="NC_011757.1"/>
</dbReference>
<dbReference type="SMR" id="B7KWA9"/>
<dbReference type="GeneID" id="72990964"/>
<dbReference type="KEGG" id="mch:Mchl_3646"/>
<dbReference type="HOGENOM" id="CLU_105899_2_0_5"/>
<dbReference type="Proteomes" id="UP000002385">
    <property type="component" value="Chromosome"/>
</dbReference>
<dbReference type="GO" id="GO:0050566">
    <property type="term" value="F:asparaginyl-tRNA synthase (glutamine-hydrolyzing) activity"/>
    <property type="evidence" value="ECO:0007669"/>
    <property type="project" value="RHEA"/>
</dbReference>
<dbReference type="GO" id="GO:0005524">
    <property type="term" value="F:ATP binding"/>
    <property type="evidence" value="ECO:0007669"/>
    <property type="project" value="UniProtKB-KW"/>
</dbReference>
<dbReference type="GO" id="GO:0050567">
    <property type="term" value="F:glutaminyl-tRNA synthase (glutamine-hydrolyzing) activity"/>
    <property type="evidence" value="ECO:0007669"/>
    <property type="project" value="UniProtKB-UniRule"/>
</dbReference>
<dbReference type="GO" id="GO:0070681">
    <property type="term" value="P:glutaminyl-tRNAGln biosynthesis via transamidation"/>
    <property type="evidence" value="ECO:0007669"/>
    <property type="project" value="TreeGrafter"/>
</dbReference>
<dbReference type="GO" id="GO:0006450">
    <property type="term" value="P:regulation of translational fidelity"/>
    <property type="evidence" value="ECO:0007669"/>
    <property type="project" value="InterPro"/>
</dbReference>
<dbReference type="GO" id="GO:0006412">
    <property type="term" value="P:translation"/>
    <property type="evidence" value="ECO:0007669"/>
    <property type="project" value="UniProtKB-UniRule"/>
</dbReference>
<dbReference type="Gene3D" id="1.10.20.60">
    <property type="entry name" value="Glu-tRNAGln amidotransferase C subunit, N-terminal domain"/>
    <property type="match status" value="1"/>
</dbReference>
<dbReference type="HAMAP" id="MF_00122">
    <property type="entry name" value="GatC"/>
    <property type="match status" value="1"/>
</dbReference>
<dbReference type="InterPro" id="IPR036113">
    <property type="entry name" value="Asp/Glu-ADT_sf_sub_c"/>
</dbReference>
<dbReference type="InterPro" id="IPR003837">
    <property type="entry name" value="GatC"/>
</dbReference>
<dbReference type="NCBIfam" id="TIGR00135">
    <property type="entry name" value="gatC"/>
    <property type="match status" value="1"/>
</dbReference>
<dbReference type="PANTHER" id="PTHR15004">
    <property type="entry name" value="GLUTAMYL-TRNA(GLN) AMIDOTRANSFERASE SUBUNIT C, MITOCHONDRIAL"/>
    <property type="match status" value="1"/>
</dbReference>
<dbReference type="PANTHER" id="PTHR15004:SF0">
    <property type="entry name" value="GLUTAMYL-TRNA(GLN) AMIDOTRANSFERASE SUBUNIT C, MITOCHONDRIAL"/>
    <property type="match status" value="1"/>
</dbReference>
<dbReference type="Pfam" id="PF02686">
    <property type="entry name" value="GatC"/>
    <property type="match status" value="1"/>
</dbReference>
<dbReference type="SUPFAM" id="SSF141000">
    <property type="entry name" value="Glu-tRNAGln amidotransferase C subunit"/>
    <property type="match status" value="1"/>
</dbReference>
<evidence type="ECO:0000255" key="1">
    <source>
        <dbReference type="HAMAP-Rule" id="MF_00122"/>
    </source>
</evidence>